<feature type="chain" id="PRO_1000197638" description="Nucleoid-associated protein A2cp1_3777">
    <location>
        <begin position="1"/>
        <end position="103"/>
    </location>
</feature>
<protein>
    <recommendedName>
        <fullName evidence="1">Nucleoid-associated protein A2cp1_3777</fullName>
    </recommendedName>
</protein>
<sequence>MDIQYLMRQAKKLEKAMADAKEKLAEIAVEAESGGGLVKVAMNGKCEITRLTVDPKAVDPNDKALLEDLVTAAVNAAVEKARTAADESMSKATGGIKIPGIAG</sequence>
<gene>
    <name type="ordered locus">A2cp1_3777</name>
</gene>
<reference key="1">
    <citation type="submission" date="2009-01" db="EMBL/GenBank/DDBJ databases">
        <title>Complete sequence of Anaeromyxobacter dehalogenans 2CP-1.</title>
        <authorList>
            <person name="Lucas S."/>
            <person name="Copeland A."/>
            <person name="Lapidus A."/>
            <person name="Glavina del Rio T."/>
            <person name="Dalin E."/>
            <person name="Tice H."/>
            <person name="Bruce D."/>
            <person name="Goodwin L."/>
            <person name="Pitluck S."/>
            <person name="Saunders E."/>
            <person name="Brettin T."/>
            <person name="Detter J.C."/>
            <person name="Han C."/>
            <person name="Larimer F."/>
            <person name="Land M."/>
            <person name="Hauser L."/>
            <person name="Kyrpides N."/>
            <person name="Ovchinnikova G."/>
            <person name="Beliaev A.S."/>
            <person name="Richardson P."/>
        </authorList>
    </citation>
    <scope>NUCLEOTIDE SEQUENCE [LARGE SCALE GENOMIC DNA]</scope>
    <source>
        <strain>2CP-1 / ATCC BAA-258</strain>
    </source>
</reference>
<accession>B8J6X9</accession>
<dbReference type="EMBL" id="CP001359">
    <property type="protein sequence ID" value="ACL67101.1"/>
    <property type="molecule type" value="Genomic_DNA"/>
</dbReference>
<dbReference type="RefSeq" id="WP_015934856.1">
    <property type="nucleotide sequence ID" value="NC_011891.1"/>
</dbReference>
<dbReference type="SMR" id="B8J6X9"/>
<dbReference type="KEGG" id="acp:A2cp1_3777"/>
<dbReference type="HOGENOM" id="CLU_140930_2_2_7"/>
<dbReference type="Proteomes" id="UP000007089">
    <property type="component" value="Chromosome"/>
</dbReference>
<dbReference type="GO" id="GO:0043590">
    <property type="term" value="C:bacterial nucleoid"/>
    <property type="evidence" value="ECO:0007669"/>
    <property type="project" value="UniProtKB-UniRule"/>
</dbReference>
<dbReference type="GO" id="GO:0005829">
    <property type="term" value="C:cytosol"/>
    <property type="evidence" value="ECO:0007669"/>
    <property type="project" value="TreeGrafter"/>
</dbReference>
<dbReference type="GO" id="GO:0003677">
    <property type="term" value="F:DNA binding"/>
    <property type="evidence" value="ECO:0007669"/>
    <property type="project" value="UniProtKB-UniRule"/>
</dbReference>
<dbReference type="Gene3D" id="3.30.1310.10">
    <property type="entry name" value="Nucleoid-associated protein YbaB-like domain"/>
    <property type="match status" value="1"/>
</dbReference>
<dbReference type="HAMAP" id="MF_00274">
    <property type="entry name" value="DNA_YbaB_EbfC"/>
    <property type="match status" value="1"/>
</dbReference>
<dbReference type="InterPro" id="IPR036894">
    <property type="entry name" value="YbaB-like_sf"/>
</dbReference>
<dbReference type="InterPro" id="IPR004401">
    <property type="entry name" value="YbaB/EbfC"/>
</dbReference>
<dbReference type="NCBIfam" id="TIGR00103">
    <property type="entry name" value="DNA_YbaB_EbfC"/>
    <property type="match status" value="1"/>
</dbReference>
<dbReference type="PANTHER" id="PTHR33449">
    <property type="entry name" value="NUCLEOID-ASSOCIATED PROTEIN YBAB"/>
    <property type="match status" value="1"/>
</dbReference>
<dbReference type="PANTHER" id="PTHR33449:SF1">
    <property type="entry name" value="NUCLEOID-ASSOCIATED PROTEIN YBAB"/>
    <property type="match status" value="1"/>
</dbReference>
<dbReference type="Pfam" id="PF02575">
    <property type="entry name" value="YbaB_DNA_bd"/>
    <property type="match status" value="1"/>
</dbReference>
<dbReference type="PIRSF" id="PIRSF004555">
    <property type="entry name" value="UCP004555"/>
    <property type="match status" value="1"/>
</dbReference>
<dbReference type="SUPFAM" id="SSF82607">
    <property type="entry name" value="YbaB-like"/>
    <property type="match status" value="1"/>
</dbReference>
<evidence type="ECO:0000255" key="1">
    <source>
        <dbReference type="HAMAP-Rule" id="MF_00274"/>
    </source>
</evidence>
<organism>
    <name type="scientific">Anaeromyxobacter dehalogenans (strain 2CP-1 / ATCC BAA-258)</name>
    <dbReference type="NCBI Taxonomy" id="455488"/>
    <lineage>
        <taxon>Bacteria</taxon>
        <taxon>Pseudomonadati</taxon>
        <taxon>Myxococcota</taxon>
        <taxon>Myxococcia</taxon>
        <taxon>Myxococcales</taxon>
        <taxon>Cystobacterineae</taxon>
        <taxon>Anaeromyxobacteraceae</taxon>
        <taxon>Anaeromyxobacter</taxon>
    </lineage>
</organism>
<comment type="function">
    <text evidence="1">Binds to DNA and alters its conformation. May be involved in regulation of gene expression, nucleoid organization and DNA protection.</text>
</comment>
<comment type="subunit">
    <text evidence="1">Homodimer.</text>
</comment>
<comment type="subcellular location">
    <subcellularLocation>
        <location evidence="1">Cytoplasm</location>
        <location evidence="1">Nucleoid</location>
    </subcellularLocation>
</comment>
<comment type="similarity">
    <text evidence="1">Belongs to the YbaB/EbfC family.</text>
</comment>
<proteinExistence type="inferred from homology"/>
<name>Y3777_ANAD2</name>
<keyword id="KW-0963">Cytoplasm</keyword>
<keyword id="KW-0238">DNA-binding</keyword>